<sequence>MEISAINLSLSVAVSSMLWSLPLAIFVAWLLARKNFYGKSLITGVIHLPLVLPPVVIGYLLLVAMGRNGFIGKYLYQWFGLSFGFSWKGAVLSSAVVAFPLVVRAIRLSLENIDIKLEQAAQTLGASAWRVFFTITLPLSLPGVLAGLVLGFARSLGEFGATITFVSNIAGETQTIPLAMYSFIQTPGAEEQTARLCLFAIILSLISLLLSEWLSKRMQKKLGQGNVAD</sequence>
<feature type="chain" id="PRO_0000060113" description="Molybdenum transport system permease protein ModB">
    <location>
        <begin position="1"/>
        <end position="229"/>
    </location>
</feature>
<feature type="transmembrane region" description="Helical" evidence="2">
    <location>
        <begin position="12"/>
        <end position="32"/>
    </location>
</feature>
<feature type="transmembrane region" description="Helical" evidence="2">
    <location>
        <begin position="45"/>
        <end position="65"/>
    </location>
</feature>
<feature type="transmembrane region" description="Helical" evidence="2">
    <location>
        <begin position="83"/>
        <end position="103"/>
    </location>
</feature>
<feature type="transmembrane region" description="Helical" evidence="2">
    <location>
        <begin position="132"/>
        <end position="152"/>
    </location>
</feature>
<feature type="transmembrane region" description="Helical" evidence="2">
    <location>
        <begin position="196"/>
        <end position="216"/>
    </location>
</feature>
<feature type="domain" description="ABC transmembrane type-1" evidence="2">
    <location>
        <begin position="6"/>
        <end position="214"/>
    </location>
</feature>
<name>MODB_HAEIN</name>
<proteinExistence type="inferred from homology"/>
<reference key="1">
    <citation type="journal article" date="1995" name="Science">
        <title>Whole-genome random sequencing and assembly of Haemophilus influenzae Rd.</title>
        <authorList>
            <person name="Fleischmann R.D."/>
            <person name="Adams M.D."/>
            <person name="White O."/>
            <person name="Clayton R.A."/>
            <person name="Kirkness E.F."/>
            <person name="Kerlavage A.R."/>
            <person name="Bult C.J."/>
            <person name="Tomb J.-F."/>
            <person name="Dougherty B.A."/>
            <person name="Merrick J.M."/>
            <person name="McKenney K."/>
            <person name="Sutton G.G."/>
            <person name="FitzHugh W."/>
            <person name="Fields C.A."/>
            <person name="Gocayne J.D."/>
            <person name="Scott J.D."/>
            <person name="Shirley R."/>
            <person name="Liu L.-I."/>
            <person name="Glodek A."/>
            <person name="Kelley J.M."/>
            <person name="Weidman J.F."/>
            <person name="Phillips C.A."/>
            <person name="Spriggs T."/>
            <person name="Hedblom E."/>
            <person name="Cotton M.D."/>
            <person name="Utterback T.R."/>
            <person name="Hanna M.C."/>
            <person name="Nguyen D.T."/>
            <person name="Saudek D.M."/>
            <person name="Brandon R.C."/>
            <person name="Fine L.D."/>
            <person name="Fritchman J.L."/>
            <person name="Fuhrmann J.L."/>
            <person name="Geoghagen N.S.M."/>
            <person name="Gnehm C.L."/>
            <person name="McDonald L.A."/>
            <person name="Small K.V."/>
            <person name="Fraser C.M."/>
            <person name="Smith H.O."/>
            <person name="Venter J.C."/>
        </authorList>
    </citation>
    <scope>NUCLEOTIDE SEQUENCE [LARGE SCALE GENOMIC DNA]</scope>
    <source>
        <strain>ATCC 51907 / DSM 11121 / KW20 / Rd</strain>
    </source>
</reference>
<accession>P45322</accession>
<keyword id="KW-0997">Cell inner membrane</keyword>
<keyword id="KW-1003">Cell membrane</keyword>
<keyword id="KW-0472">Membrane</keyword>
<keyword id="KW-0500">Molybdenum</keyword>
<keyword id="KW-1185">Reference proteome</keyword>
<keyword id="KW-0812">Transmembrane</keyword>
<keyword id="KW-1133">Transmembrane helix</keyword>
<keyword id="KW-0813">Transport</keyword>
<protein>
    <recommendedName>
        <fullName>Molybdenum transport system permease protein ModB</fullName>
    </recommendedName>
</protein>
<comment type="function">
    <text evidence="1">Part of the binding-protein-dependent transport system for molybdenum; probably responsible for the translocation of the substrate across the membrane.</text>
</comment>
<comment type="subcellular location">
    <subcellularLocation>
        <location evidence="1">Cell inner membrane</location>
        <topology evidence="2">Multi-pass membrane protein</topology>
    </subcellularLocation>
</comment>
<comment type="similarity">
    <text evidence="3">Belongs to the binding-protein-dependent transport system permease family. CysTW subfamily.</text>
</comment>
<dbReference type="EMBL" id="L42023">
    <property type="protein sequence ID" value="AAC23338.1"/>
    <property type="molecule type" value="Genomic_DNA"/>
</dbReference>
<dbReference type="PIR" id="A64137">
    <property type="entry name" value="A64137"/>
</dbReference>
<dbReference type="RefSeq" id="NP_439834.1">
    <property type="nucleotide sequence ID" value="NC_000907.1"/>
</dbReference>
<dbReference type="SMR" id="P45322"/>
<dbReference type="STRING" id="71421.HI_1692"/>
<dbReference type="EnsemblBacteria" id="AAC23338">
    <property type="protein sequence ID" value="AAC23338"/>
    <property type="gene ID" value="HI_1692"/>
</dbReference>
<dbReference type="KEGG" id="hin:HI_1692"/>
<dbReference type="PATRIC" id="fig|71421.8.peg.1771"/>
<dbReference type="eggNOG" id="COG4149">
    <property type="taxonomic scope" value="Bacteria"/>
</dbReference>
<dbReference type="HOGENOM" id="CLU_016047_14_3_6"/>
<dbReference type="OrthoDB" id="9795403at2"/>
<dbReference type="PhylomeDB" id="P45322"/>
<dbReference type="BioCyc" id="HINF71421:G1GJ1-1708-MONOMER"/>
<dbReference type="Proteomes" id="UP000000579">
    <property type="component" value="Chromosome"/>
</dbReference>
<dbReference type="GO" id="GO:0005886">
    <property type="term" value="C:plasma membrane"/>
    <property type="evidence" value="ECO:0000318"/>
    <property type="project" value="GO_Central"/>
</dbReference>
<dbReference type="GO" id="GO:0015098">
    <property type="term" value="F:molybdate ion transmembrane transporter activity"/>
    <property type="evidence" value="ECO:0007669"/>
    <property type="project" value="InterPro"/>
</dbReference>
<dbReference type="CDD" id="cd06261">
    <property type="entry name" value="TM_PBP2"/>
    <property type="match status" value="1"/>
</dbReference>
<dbReference type="FunFam" id="1.10.3720.10:FF:000018">
    <property type="entry name" value="Molybdenum transport system permease"/>
    <property type="match status" value="1"/>
</dbReference>
<dbReference type="Gene3D" id="1.10.3720.10">
    <property type="entry name" value="MetI-like"/>
    <property type="match status" value="1"/>
</dbReference>
<dbReference type="InterPro" id="IPR000515">
    <property type="entry name" value="MetI-like"/>
</dbReference>
<dbReference type="InterPro" id="IPR035906">
    <property type="entry name" value="MetI-like_sf"/>
</dbReference>
<dbReference type="InterPro" id="IPR011867">
    <property type="entry name" value="ModB_ABC"/>
</dbReference>
<dbReference type="NCBIfam" id="TIGR02141">
    <property type="entry name" value="modB_ABC"/>
    <property type="match status" value="1"/>
</dbReference>
<dbReference type="NCBIfam" id="NF006939">
    <property type="entry name" value="PRK09421.1"/>
    <property type="match status" value="1"/>
</dbReference>
<dbReference type="PANTHER" id="PTHR30183">
    <property type="entry name" value="MOLYBDENUM TRANSPORT SYSTEM PERMEASE PROTEIN MODB"/>
    <property type="match status" value="1"/>
</dbReference>
<dbReference type="PANTHER" id="PTHR30183:SF3">
    <property type="entry name" value="MOLYBDENUM TRANSPORT SYSTEM PERMEASE PROTEIN MODB"/>
    <property type="match status" value="1"/>
</dbReference>
<dbReference type="Pfam" id="PF00528">
    <property type="entry name" value="BPD_transp_1"/>
    <property type="match status" value="1"/>
</dbReference>
<dbReference type="SUPFAM" id="SSF161098">
    <property type="entry name" value="MetI-like"/>
    <property type="match status" value="1"/>
</dbReference>
<dbReference type="PROSITE" id="PS50928">
    <property type="entry name" value="ABC_TM1"/>
    <property type="match status" value="1"/>
</dbReference>
<evidence type="ECO:0000250" key="1"/>
<evidence type="ECO:0000255" key="2">
    <source>
        <dbReference type="PROSITE-ProRule" id="PRU00441"/>
    </source>
</evidence>
<evidence type="ECO:0000305" key="3"/>
<organism>
    <name type="scientific">Haemophilus influenzae (strain ATCC 51907 / DSM 11121 / KW20 / Rd)</name>
    <dbReference type="NCBI Taxonomy" id="71421"/>
    <lineage>
        <taxon>Bacteria</taxon>
        <taxon>Pseudomonadati</taxon>
        <taxon>Pseudomonadota</taxon>
        <taxon>Gammaproteobacteria</taxon>
        <taxon>Pasteurellales</taxon>
        <taxon>Pasteurellaceae</taxon>
        <taxon>Haemophilus</taxon>
    </lineage>
</organism>
<gene>
    <name type="primary">modB</name>
    <name type="ordered locus">HI_1692</name>
</gene>